<reference key="1">
    <citation type="journal article" date="2001" name="Nature">
        <title>Genome sequence of Yersinia pestis, the causative agent of plague.</title>
        <authorList>
            <person name="Parkhill J."/>
            <person name="Wren B.W."/>
            <person name="Thomson N.R."/>
            <person name="Titball R.W."/>
            <person name="Holden M.T.G."/>
            <person name="Prentice M.B."/>
            <person name="Sebaihia M."/>
            <person name="James K.D."/>
            <person name="Churcher C.M."/>
            <person name="Mungall K.L."/>
            <person name="Baker S."/>
            <person name="Basham D."/>
            <person name="Bentley S.D."/>
            <person name="Brooks K."/>
            <person name="Cerdeno-Tarraga A.-M."/>
            <person name="Chillingworth T."/>
            <person name="Cronin A."/>
            <person name="Davies R.M."/>
            <person name="Davis P."/>
            <person name="Dougan G."/>
            <person name="Feltwell T."/>
            <person name="Hamlin N."/>
            <person name="Holroyd S."/>
            <person name="Jagels K."/>
            <person name="Karlyshev A.V."/>
            <person name="Leather S."/>
            <person name="Moule S."/>
            <person name="Oyston P.C.F."/>
            <person name="Quail M.A."/>
            <person name="Rutherford K.M."/>
            <person name="Simmonds M."/>
            <person name="Skelton J."/>
            <person name="Stevens K."/>
            <person name="Whitehead S."/>
            <person name="Barrell B.G."/>
        </authorList>
    </citation>
    <scope>NUCLEOTIDE SEQUENCE [LARGE SCALE GENOMIC DNA]</scope>
    <source>
        <strain>CO-92 / Biovar Orientalis</strain>
    </source>
</reference>
<reference key="2">
    <citation type="journal article" date="2002" name="J. Bacteriol.">
        <title>Genome sequence of Yersinia pestis KIM.</title>
        <authorList>
            <person name="Deng W."/>
            <person name="Burland V."/>
            <person name="Plunkett G. III"/>
            <person name="Boutin A."/>
            <person name="Mayhew G.F."/>
            <person name="Liss P."/>
            <person name="Perna N.T."/>
            <person name="Rose D.J."/>
            <person name="Mau B."/>
            <person name="Zhou S."/>
            <person name="Schwartz D.C."/>
            <person name="Fetherston J.D."/>
            <person name="Lindler L.E."/>
            <person name="Brubaker R.R."/>
            <person name="Plano G.V."/>
            <person name="Straley S.C."/>
            <person name="McDonough K.A."/>
            <person name="Nilles M.L."/>
            <person name="Matson J.S."/>
            <person name="Blattner F.R."/>
            <person name="Perry R.D."/>
        </authorList>
    </citation>
    <scope>NUCLEOTIDE SEQUENCE [LARGE SCALE GENOMIC DNA]</scope>
    <source>
        <strain>KIM10+ / Biovar Mediaevalis</strain>
    </source>
</reference>
<reference key="3">
    <citation type="journal article" date="2004" name="DNA Res.">
        <title>Complete genome sequence of Yersinia pestis strain 91001, an isolate avirulent to humans.</title>
        <authorList>
            <person name="Song Y."/>
            <person name="Tong Z."/>
            <person name="Wang J."/>
            <person name="Wang L."/>
            <person name="Guo Z."/>
            <person name="Han Y."/>
            <person name="Zhang J."/>
            <person name="Pei D."/>
            <person name="Zhou D."/>
            <person name="Qin H."/>
            <person name="Pang X."/>
            <person name="Han Y."/>
            <person name="Zhai J."/>
            <person name="Li M."/>
            <person name="Cui B."/>
            <person name="Qi Z."/>
            <person name="Jin L."/>
            <person name="Dai R."/>
            <person name="Chen F."/>
            <person name="Li S."/>
            <person name="Ye C."/>
            <person name="Du Z."/>
            <person name="Lin W."/>
            <person name="Wang J."/>
            <person name="Yu J."/>
            <person name="Yang H."/>
            <person name="Wang J."/>
            <person name="Huang P."/>
            <person name="Yang R."/>
        </authorList>
    </citation>
    <scope>NUCLEOTIDE SEQUENCE [LARGE SCALE GENOMIC DNA]</scope>
    <source>
        <strain>91001 / Biovar Mediaevalis</strain>
    </source>
</reference>
<evidence type="ECO:0000250" key="1">
    <source>
        <dbReference type="UniProtKB" id="P0AFP6"/>
    </source>
</evidence>
<evidence type="ECO:0000305" key="2"/>
<dbReference type="EMBL" id="AL590842">
    <property type="protein sequence ID" value="CAL21316.1"/>
    <property type="status" value="ALT_INIT"/>
    <property type="molecule type" value="Genomic_DNA"/>
</dbReference>
<dbReference type="EMBL" id="AE009952">
    <property type="protein sequence ID" value="AAM84846.1"/>
    <property type="status" value="ALT_INIT"/>
    <property type="molecule type" value="Genomic_DNA"/>
</dbReference>
<dbReference type="EMBL" id="AE017042">
    <property type="protein sequence ID" value="AAS62700.1"/>
    <property type="status" value="ALT_INIT"/>
    <property type="molecule type" value="Genomic_DNA"/>
</dbReference>
<dbReference type="PIR" id="AI0328">
    <property type="entry name" value="AI0328"/>
</dbReference>
<dbReference type="RefSeq" id="WP_002354507.1">
    <property type="nucleotide sequence ID" value="NZ_WUCM01000006.1"/>
</dbReference>
<dbReference type="RefSeq" id="YP_002347645.1">
    <property type="nucleotide sequence ID" value="NC_003143.1"/>
</dbReference>
<dbReference type="SMR" id="Q8ZD91"/>
<dbReference type="IntAct" id="Q8ZD91">
    <property type="interactions" value="6"/>
</dbReference>
<dbReference type="STRING" id="214092.YPO2697"/>
<dbReference type="PaxDb" id="214092-YPO2697"/>
<dbReference type="DNASU" id="1146219"/>
<dbReference type="EnsemblBacteria" id="AAS62700">
    <property type="protein sequence ID" value="AAS62700"/>
    <property type="gene ID" value="YP_2501"/>
</dbReference>
<dbReference type="KEGG" id="ype:YPO2697"/>
<dbReference type="KEGG" id="ypj:CH55_1472"/>
<dbReference type="KEGG" id="ypk:y1272"/>
<dbReference type="KEGG" id="ypl:CH46_2410"/>
<dbReference type="KEGG" id="ypm:YP_2501"/>
<dbReference type="KEGG" id="ypv:BZ15_834"/>
<dbReference type="KEGG" id="ypw:CH59_3579"/>
<dbReference type="PATRIC" id="fig|214092.21.peg.3135"/>
<dbReference type="eggNOG" id="COG0327">
    <property type="taxonomic scope" value="Bacteria"/>
</dbReference>
<dbReference type="HOGENOM" id="CLU_037423_3_0_6"/>
<dbReference type="OMA" id="RRVGWCT"/>
<dbReference type="Proteomes" id="UP000000815">
    <property type="component" value="Chromosome"/>
</dbReference>
<dbReference type="Proteomes" id="UP000001019">
    <property type="component" value="Chromosome"/>
</dbReference>
<dbReference type="Proteomes" id="UP000002490">
    <property type="component" value="Chromosome"/>
</dbReference>
<dbReference type="GO" id="GO:0005737">
    <property type="term" value="C:cytoplasm"/>
    <property type="evidence" value="ECO:0000318"/>
    <property type="project" value="GO_Central"/>
</dbReference>
<dbReference type="GO" id="GO:0046872">
    <property type="term" value="F:metal ion binding"/>
    <property type="evidence" value="ECO:0007669"/>
    <property type="project" value="UniProtKB-KW"/>
</dbReference>
<dbReference type="FunFam" id="3.40.1390.30:FF:000002">
    <property type="entry name" value="Nif3-like dinuclear metal center protein"/>
    <property type="match status" value="1"/>
</dbReference>
<dbReference type="Gene3D" id="3.40.1390.30">
    <property type="entry name" value="NIF3 (NGG1p interacting factor 3)-like"/>
    <property type="match status" value="2"/>
</dbReference>
<dbReference type="InterPro" id="IPR002678">
    <property type="entry name" value="DUF34/NIF3"/>
</dbReference>
<dbReference type="InterPro" id="IPR036069">
    <property type="entry name" value="DUF34/NIF3_sf"/>
</dbReference>
<dbReference type="NCBIfam" id="NF008064">
    <property type="entry name" value="PRK10799.1"/>
    <property type="match status" value="1"/>
</dbReference>
<dbReference type="NCBIfam" id="TIGR00486">
    <property type="entry name" value="YbgI_SA1388"/>
    <property type="match status" value="1"/>
</dbReference>
<dbReference type="PANTHER" id="PTHR13799:SF14">
    <property type="entry name" value="GTP CYCLOHYDROLASE 1 TYPE 2 HOMOLOG"/>
    <property type="match status" value="1"/>
</dbReference>
<dbReference type="PANTHER" id="PTHR13799">
    <property type="entry name" value="NGG1 INTERACTING FACTOR 3"/>
    <property type="match status" value="1"/>
</dbReference>
<dbReference type="Pfam" id="PF01784">
    <property type="entry name" value="DUF34_NIF3"/>
    <property type="match status" value="1"/>
</dbReference>
<dbReference type="SUPFAM" id="SSF102705">
    <property type="entry name" value="NIF3 (NGG1p interacting factor 3)-like"/>
    <property type="match status" value="1"/>
</dbReference>
<proteinExistence type="inferred from homology"/>
<gene>
    <name type="ordered locus">YPO2697</name>
    <name type="ordered locus">y1272</name>
    <name type="ordered locus">YP_2501</name>
</gene>
<organism>
    <name type="scientific">Yersinia pestis</name>
    <dbReference type="NCBI Taxonomy" id="632"/>
    <lineage>
        <taxon>Bacteria</taxon>
        <taxon>Pseudomonadati</taxon>
        <taxon>Pseudomonadota</taxon>
        <taxon>Gammaproteobacteria</taxon>
        <taxon>Enterobacterales</taxon>
        <taxon>Yersiniaceae</taxon>
        <taxon>Yersinia</taxon>
    </lineage>
</organism>
<comment type="subunit">
    <text evidence="1">Homohexamer.</text>
</comment>
<comment type="similarity">
    <text evidence="2">Belongs to the GTP cyclohydrolase I type 2/NIF3 family.</text>
</comment>
<comment type="sequence caution" evidence="2">
    <conflict type="erroneous initiation">
        <sequence resource="EMBL-CDS" id="AAM84846"/>
    </conflict>
</comment>
<comment type="sequence caution" evidence="2">
    <conflict type="erroneous initiation">
        <sequence resource="EMBL-CDS" id="AAS62700"/>
    </conflict>
</comment>
<comment type="sequence caution" evidence="2">
    <conflict type="erroneous initiation">
        <sequence resource="EMBL-CDS" id="CAL21316"/>
    </conflict>
</comment>
<accession>Q8ZD91</accession>
<accession>Q0WDJ3</accession>
<keyword id="KW-0479">Metal-binding</keyword>
<keyword id="KW-1185">Reference proteome</keyword>
<name>GCH1L_YERPE</name>
<feature type="chain" id="PRO_0000147344" description="GTP cyclohydrolase 1 type 2 homolog">
    <location>
        <begin position="1"/>
        <end position="247"/>
    </location>
</feature>
<feature type="binding site" evidence="1">
    <location>
        <position position="63"/>
    </location>
    <ligand>
        <name>a divalent metal cation</name>
        <dbReference type="ChEBI" id="CHEBI:60240"/>
        <label>1</label>
    </ligand>
</feature>
<feature type="binding site" evidence="1">
    <location>
        <position position="64"/>
    </location>
    <ligand>
        <name>a divalent metal cation</name>
        <dbReference type="ChEBI" id="CHEBI:60240"/>
        <label>2</label>
    </ligand>
</feature>
<feature type="binding site" evidence="1">
    <location>
        <position position="101"/>
    </location>
    <ligand>
        <name>a divalent metal cation</name>
        <dbReference type="ChEBI" id="CHEBI:60240"/>
        <label>1</label>
    </ligand>
</feature>
<feature type="binding site" evidence="1">
    <location>
        <position position="215"/>
    </location>
    <ligand>
        <name>a divalent metal cation</name>
        <dbReference type="ChEBI" id="CHEBI:60240"/>
        <label>2</label>
    </ligand>
</feature>
<feature type="binding site" evidence="1">
    <location>
        <position position="219"/>
    </location>
    <ligand>
        <name>a divalent metal cation</name>
        <dbReference type="ChEBI" id="CHEBI:60240"/>
        <label>1</label>
    </ligand>
</feature>
<feature type="binding site" evidence="1">
    <location>
        <position position="219"/>
    </location>
    <ligand>
        <name>a divalent metal cation</name>
        <dbReference type="ChEBI" id="CHEBI:60240"/>
        <label>2</label>
    </ligand>
</feature>
<feature type="sequence conflict" description="In Ref. 3; AAS62700." evidence="2" ref="3">
    <original>Y</original>
    <variation>H</variation>
    <location>
        <position position="234"/>
    </location>
</feature>
<protein>
    <recommendedName>
        <fullName>GTP cyclohydrolase 1 type 2 homolog</fullName>
    </recommendedName>
</protein>
<sequence>MRNVELETVLNNQLNIGAFQDYAPNGLQVEGRRDIQRVVTGVTASQALLDAAVAHQADAILVHHGYFWKNEPVVVRGMKRNRLKTLLTHDINLYGYHLPLDAHPELGNNAQLAKLLEIQVLGEIESLLPYGEFTTPLNAVALRERLEKQLGRSVLHCGDRAPAEVRRIAWCTGGGQGYIQQAAEFGVDAFITGEVSEQTIHIAREMKVNFYAAGHHATERYGIKALGEWLAEQYQLDVTFIDIPNPA</sequence>